<protein>
    <recommendedName>
        <fullName evidence="1">4-deoxy-L-threo-5-hexosulose-uronate ketol-isomerase</fullName>
        <ecNumber evidence="1">5.3.1.17</ecNumber>
    </recommendedName>
    <alternativeName>
        <fullName evidence="1">5-keto-4-deoxyuronate isomerase</fullName>
    </alternativeName>
    <alternativeName>
        <fullName evidence="1">DKI isomerase</fullName>
    </alternativeName>
</protein>
<gene>
    <name evidence="1" type="primary">kduI</name>
    <name type="ordered locus">SG2927</name>
</gene>
<dbReference type="EC" id="5.3.1.17" evidence="1"/>
<dbReference type="EMBL" id="AM933173">
    <property type="protein sequence ID" value="CAR38732.1"/>
    <property type="molecule type" value="Genomic_DNA"/>
</dbReference>
<dbReference type="RefSeq" id="WP_000383274.1">
    <property type="nucleotide sequence ID" value="NC_011274.1"/>
</dbReference>
<dbReference type="SMR" id="B5RDZ4"/>
<dbReference type="KEGG" id="seg:SG2927"/>
<dbReference type="HOGENOM" id="CLU_062609_0_0_6"/>
<dbReference type="UniPathway" id="UPA00545">
    <property type="reaction ID" value="UER00826"/>
</dbReference>
<dbReference type="Proteomes" id="UP000008321">
    <property type="component" value="Chromosome"/>
</dbReference>
<dbReference type="GO" id="GO:0008697">
    <property type="term" value="F:4-deoxy-L-threo-5-hexosulose-uronate ketol-isomerase activity"/>
    <property type="evidence" value="ECO:0007669"/>
    <property type="project" value="UniProtKB-UniRule"/>
</dbReference>
<dbReference type="GO" id="GO:0008270">
    <property type="term" value="F:zinc ion binding"/>
    <property type="evidence" value="ECO:0007669"/>
    <property type="project" value="UniProtKB-UniRule"/>
</dbReference>
<dbReference type="GO" id="GO:0019698">
    <property type="term" value="P:D-galacturonate catabolic process"/>
    <property type="evidence" value="ECO:0007669"/>
    <property type="project" value="TreeGrafter"/>
</dbReference>
<dbReference type="GO" id="GO:0042840">
    <property type="term" value="P:D-glucuronate catabolic process"/>
    <property type="evidence" value="ECO:0007669"/>
    <property type="project" value="TreeGrafter"/>
</dbReference>
<dbReference type="GO" id="GO:0045490">
    <property type="term" value="P:pectin catabolic process"/>
    <property type="evidence" value="ECO:0007669"/>
    <property type="project" value="UniProtKB-UniRule"/>
</dbReference>
<dbReference type="CDD" id="cd20491">
    <property type="entry name" value="cupin_KduI_C"/>
    <property type="match status" value="1"/>
</dbReference>
<dbReference type="CDD" id="cd20294">
    <property type="entry name" value="cupin_KduI_N"/>
    <property type="match status" value="1"/>
</dbReference>
<dbReference type="FunFam" id="2.60.120.10:FF:000018">
    <property type="entry name" value="4-deoxy-L-threo-5-hexosulose-uronate ketol-isomerase"/>
    <property type="match status" value="1"/>
</dbReference>
<dbReference type="FunFam" id="2.60.120.520:FF:000001">
    <property type="entry name" value="4-deoxy-L-threo-5-hexosulose-uronate ketol-isomerase"/>
    <property type="match status" value="1"/>
</dbReference>
<dbReference type="Gene3D" id="2.60.120.10">
    <property type="entry name" value="Jelly Rolls"/>
    <property type="match status" value="1"/>
</dbReference>
<dbReference type="Gene3D" id="2.60.120.520">
    <property type="entry name" value="pectin degrading enzyme 5-keto 4- deoxyuronate isomerase, domain 1"/>
    <property type="match status" value="1"/>
</dbReference>
<dbReference type="HAMAP" id="MF_00687">
    <property type="entry name" value="KduI"/>
    <property type="match status" value="1"/>
</dbReference>
<dbReference type="InterPro" id="IPR007045">
    <property type="entry name" value="KduI"/>
</dbReference>
<dbReference type="InterPro" id="IPR021120">
    <property type="entry name" value="KduI/IolB_isomerase"/>
</dbReference>
<dbReference type="InterPro" id="IPR027449">
    <property type="entry name" value="KduI_N"/>
</dbReference>
<dbReference type="InterPro" id="IPR014710">
    <property type="entry name" value="RmlC-like_jellyroll"/>
</dbReference>
<dbReference type="InterPro" id="IPR011051">
    <property type="entry name" value="RmlC_Cupin_sf"/>
</dbReference>
<dbReference type="NCBIfam" id="NF002091">
    <property type="entry name" value="PRK00924.1"/>
    <property type="match status" value="1"/>
</dbReference>
<dbReference type="PANTHER" id="PTHR38461">
    <property type="entry name" value="4-DEOXY-L-THREO-5-HEXOSULOSE-URONATE KETOL-ISOMERASE"/>
    <property type="match status" value="1"/>
</dbReference>
<dbReference type="PANTHER" id="PTHR38461:SF1">
    <property type="entry name" value="4-DEOXY-L-THREO-5-HEXOSULOSE-URONATE KETOL-ISOMERASE"/>
    <property type="match status" value="1"/>
</dbReference>
<dbReference type="Pfam" id="PF04962">
    <property type="entry name" value="KduI"/>
    <property type="match status" value="1"/>
</dbReference>
<dbReference type="PIRSF" id="PIRSF006625">
    <property type="entry name" value="KduI"/>
    <property type="match status" value="1"/>
</dbReference>
<dbReference type="SUPFAM" id="SSF51182">
    <property type="entry name" value="RmlC-like cupins"/>
    <property type="match status" value="1"/>
</dbReference>
<sequence>MDVRQSIHSEHAKTLDTQALRREFLIENIFVADEYTMVYSHIDRIIVGGIMPVSHSVEIGGEVGKQLGVSRLLDRRELGVINIGGAGAIIVDGQRHDIGHRDALYIGKGAKELVFVSNEASRPAKFYYNCAPAHTAYPTKKVSPADVAPVTLGDNLTSNRRTINKYFVPDVLETCQLSMGLTELAPGNLWNTMPCHTHERRMEVYLYFNMEEDSCVFHMMGQPQETRHIVMRNEQAVISPSWSIHSGVGTKAYTFIWGMVGENQVFDDMDHVAVQDLR</sequence>
<comment type="function">
    <text evidence="1">Catalyzes the isomerization of 5-dehydro-4-deoxy-D-glucuronate to 3-deoxy-D-glycero-2,5-hexodiulosonate.</text>
</comment>
<comment type="catalytic activity">
    <reaction evidence="1">
        <text>5-dehydro-4-deoxy-D-glucuronate = 3-deoxy-D-glycero-2,5-hexodiulosonate</text>
        <dbReference type="Rhea" id="RHEA:23896"/>
        <dbReference type="ChEBI" id="CHEBI:17117"/>
        <dbReference type="ChEBI" id="CHEBI:29071"/>
        <dbReference type="EC" id="5.3.1.17"/>
    </reaction>
</comment>
<comment type="cofactor">
    <cofactor evidence="1">
        <name>Zn(2+)</name>
        <dbReference type="ChEBI" id="CHEBI:29105"/>
    </cofactor>
    <text evidence="1">Binds 1 zinc ion per subunit.</text>
</comment>
<comment type="pathway">
    <text evidence="1">Glycan metabolism; pectin degradation; 2-dehydro-3-deoxy-D-gluconate from pectin: step 4/5.</text>
</comment>
<comment type="similarity">
    <text evidence="1">Belongs to the KduI family.</text>
</comment>
<evidence type="ECO:0000255" key="1">
    <source>
        <dbReference type="HAMAP-Rule" id="MF_00687"/>
    </source>
</evidence>
<keyword id="KW-0413">Isomerase</keyword>
<keyword id="KW-0479">Metal-binding</keyword>
<keyword id="KW-0862">Zinc</keyword>
<proteinExistence type="inferred from homology"/>
<organism>
    <name type="scientific">Salmonella gallinarum (strain 287/91 / NCTC 13346)</name>
    <dbReference type="NCBI Taxonomy" id="550538"/>
    <lineage>
        <taxon>Bacteria</taxon>
        <taxon>Pseudomonadati</taxon>
        <taxon>Pseudomonadota</taxon>
        <taxon>Gammaproteobacteria</taxon>
        <taxon>Enterobacterales</taxon>
        <taxon>Enterobacteriaceae</taxon>
        <taxon>Salmonella</taxon>
    </lineage>
</organism>
<feature type="chain" id="PRO_1000131891" description="4-deoxy-L-threo-5-hexosulose-uronate ketol-isomerase">
    <location>
        <begin position="1"/>
        <end position="278"/>
    </location>
</feature>
<feature type="binding site" evidence="1">
    <location>
        <position position="196"/>
    </location>
    <ligand>
        <name>Zn(2+)</name>
        <dbReference type="ChEBI" id="CHEBI:29105"/>
    </ligand>
</feature>
<feature type="binding site" evidence="1">
    <location>
        <position position="198"/>
    </location>
    <ligand>
        <name>Zn(2+)</name>
        <dbReference type="ChEBI" id="CHEBI:29105"/>
    </ligand>
</feature>
<feature type="binding site" evidence="1">
    <location>
        <position position="203"/>
    </location>
    <ligand>
        <name>Zn(2+)</name>
        <dbReference type="ChEBI" id="CHEBI:29105"/>
    </ligand>
</feature>
<feature type="binding site" evidence="1">
    <location>
        <position position="245"/>
    </location>
    <ligand>
        <name>Zn(2+)</name>
        <dbReference type="ChEBI" id="CHEBI:29105"/>
    </ligand>
</feature>
<name>KDUI_SALG2</name>
<reference key="1">
    <citation type="journal article" date="2008" name="Genome Res.">
        <title>Comparative genome analysis of Salmonella enteritidis PT4 and Salmonella gallinarum 287/91 provides insights into evolutionary and host adaptation pathways.</title>
        <authorList>
            <person name="Thomson N.R."/>
            <person name="Clayton D.J."/>
            <person name="Windhorst D."/>
            <person name="Vernikos G."/>
            <person name="Davidson S."/>
            <person name="Churcher C."/>
            <person name="Quail M.A."/>
            <person name="Stevens M."/>
            <person name="Jones M.A."/>
            <person name="Watson M."/>
            <person name="Barron A."/>
            <person name="Layton A."/>
            <person name="Pickard D."/>
            <person name="Kingsley R.A."/>
            <person name="Bignell A."/>
            <person name="Clark L."/>
            <person name="Harris B."/>
            <person name="Ormond D."/>
            <person name="Abdellah Z."/>
            <person name="Brooks K."/>
            <person name="Cherevach I."/>
            <person name="Chillingworth T."/>
            <person name="Woodward J."/>
            <person name="Norberczak H."/>
            <person name="Lord A."/>
            <person name="Arrowsmith C."/>
            <person name="Jagels K."/>
            <person name="Moule S."/>
            <person name="Mungall K."/>
            <person name="Saunders M."/>
            <person name="Whitehead S."/>
            <person name="Chabalgoity J.A."/>
            <person name="Maskell D."/>
            <person name="Humphreys T."/>
            <person name="Roberts M."/>
            <person name="Barrow P.A."/>
            <person name="Dougan G."/>
            <person name="Parkhill J."/>
        </authorList>
    </citation>
    <scope>NUCLEOTIDE SEQUENCE [LARGE SCALE GENOMIC DNA]</scope>
    <source>
        <strain>287/91 / NCTC 13346</strain>
    </source>
</reference>
<accession>B5RDZ4</accession>